<dbReference type="EMBL" id="CP000482">
    <property type="protein sequence ID" value="ABL00481.1"/>
    <property type="molecule type" value="Genomic_DNA"/>
</dbReference>
<dbReference type="RefSeq" id="WP_011736716.1">
    <property type="nucleotide sequence ID" value="NC_008609.1"/>
</dbReference>
<dbReference type="SMR" id="A1AT10"/>
<dbReference type="STRING" id="338966.Ppro_2883"/>
<dbReference type="KEGG" id="ppd:Ppro_2883"/>
<dbReference type="eggNOG" id="COG1381">
    <property type="taxonomic scope" value="Bacteria"/>
</dbReference>
<dbReference type="HOGENOM" id="CLU_066632_2_0_7"/>
<dbReference type="OrthoDB" id="9780797at2"/>
<dbReference type="Proteomes" id="UP000006732">
    <property type="component" value="Chromosome"/>
</dbReference>
<dbReference type="GO" id="GO:0043590">
    <property type="term" value="C:bacterial nucleoid"/>
    <property type="evidence" value="ECO:0007669"/>
    <property type="project" value="TreeGrafter"/>
</dbReference>
<dbReference type="GO" id="GO:0006310">
    <property type="term" value="P:DNA recombination"/>
    <property type="evidence" value="ECO:0007669"/>
    <property type="project" value="UniProtKB-UniRule"/>
</dbReference>
<dbReference type="GO" id="GO:0006302">
    <property type="term" value="P:double-strand break repair"/>
    <property type="evidence" value="ECO:0007669"/>
    <property type="project" value="TreeGrafter"/>
</dbReference>
<dbReference type="Gene3D" id="2.40.50.140">
    <property type="entry name" value="Nucleic acid-binding proteins"/>
    <property type="match status" value="1"/>
</dbReference>
<dbReference type="Gene3D" id="1.20.1440.120">
    <property type="entry name" value="Recombination protein O, C-terminal domain"/>
    <property type="match status" value="1"/>
</dbReference>
<dbReference type="HAMAP" id="MF_00201">
    <property type="entry name" value="RecO"/>
    <property type="match status" value="1"/>
</dbReference>
<dbReference type="InterPro" id="IPR037278">
    <property type="entry name" value="ARFGAP/RecO"/>
</dbReference>
<dbReference type="InterPro" id="IPR022572">
    <property type="entry name" value="DNA_rep/recomb_RecO_N"/>
</dbReference>
<dbReference type="InterPro" id="IPR012340">
    <property type="entry name" value="NA-bd_OB-fold"/>
</dbReference>
<dbReference type="InterPro" id="IPR003717">
    <property type="entry name" value="RecO"/>
</dbReference>
<dbReference type="InterPro" id="IPR042242">
    <property type="entry name" value="RecO_C"/>
</dbReference>
<dbReference type="NCBIfam" id="TIGR00613">
    <property type="entry name" value="reco"/>
    <property type="match status" value="1"/>
</dbReference>
<dbReference type="PANTHER" id="PTHR33991">
    <property type="entry name" value="DNA REPAIR PROTEIN RECO"/>
    <property type="match status" value="1"/>
</dbReference>
<dbReference type="PANTHER" id="PTHR33991:SF1">
    <property type="entry name" value="DNA REPAIR PROTEIN RECO"/>
    <property type="match status" value="1"/>
</dbReference>
<dbReference type="Pfam" id="PF02565">
    <property type="entry name" value="RecO_C"/>
    <property type="match status" value="1"/>
</dbReference>
<dbReference type="Pfam" id="PF11967">
    <property type="entry name" value="RecO_N"/>
    <property type="match status" value="1"/>
</dbReference>
<dbReference type="SUPFAM" id="SSF57863">
    <property type="entry name" value="ArfGap/RecO-like zinc finger"/>
    <property type="match status" value="1"/>
</dbReference>
<dbReference type="SUPFAM" id="SSF50249">
    <property type="entry name" value="Nucleic acid-binding proteins"/>
    <property type="match status" value="1"/>
</dbReference>
<reference key="1">
    <citation type="submission" date="2006-10" db="EMBL/GenBank/DDBJ databases">
        <title>Complete sequence of chromosome of Pelobacter propionicus DSM 2379.</title>
        <authorList>
            <consortium name="US DOE Joint Genome Institute"/>
            <person name="Copeland A."/>
            <person name="Lucas S."/>
            <person name="Lapidus A."/>
            <person name="Barry K."/>
            <person name="Detter J.C."/>
            <person name="Glavina del Rio T."/>
            <person name="Hammon N."/>
            <person name="Israni S."/>
            <person name="Dalin E."/>
            <person name="Tice H."/>
            <person name="Pitluck S."/>
            <person name="Saunders E."/>
            <person name="Brettin T."/>
            <person name="Bruce D."/>
            <person name="Han C."/>
            <person name="Tapia R."/>
            <person name="Schmutz J."/>
            <person name="Larimer F."/>
            <person name="Land M."/>
            <person name="Hauser L."/>
            <person name="Kyrpides N."/>
            <person name="Kim E."/>
            <person name="Lovley D."/>
            <person name="Richardson P."/>
        </authorList>
    </citation>
    <scope>NUCLEOTIDE SEQUENCE [LARGE SCALE GENOMIC DNA]</scope>
    <source>
        <strain>DSM 2379 / NBRC 103807 / OttBd1</strain>
    </source>
</reference>
<comment type="function">
    <text evidence="1">Involved in DNA repair and RecF pathway recombination.</text>
</comment>
<comment type="similarity">
    <text evidence="1">Belongs to the RecO family.</text>
</comment>
<gene>
    <name evidence="1" type="primary">recO</name>
    <name type="ordered locus">Ppro_2883</name>
</gene>
<sequence>MHPEKLQAYVLSTLDYGDSDRIVALFTLEHGRIKAFARRARNSRRRFGAALEIFARIEAHVEIKQGGLSGLRQAEIDCIYPGIRGDLGRIAYALYACELVDAMTPEGHPLPRLFRLLAAYLDRLEAYPASEQERRFFEINLLNILGYRPSLEACSRCGTPFDDRGALLLDDGELVCRACTGHGRDMTQVTLGRMLACLKTGTFGLIHFPDEAQAQTGSALDRALAFHAGHRLKSLEFLRQISNENQ</sequence>
<name>RECO_PELPD</name>
<protein>
    <recommendedName>
        <fullName evidence="1">DNA repair protein RecO</fullName>
    </recommendedName>
    <alternativeName>
        <fullName evidence="1">Recombination protein O</fullName>
    </alternativeName>
</protein>
<accession>A1AT10</accession>
<feature type="chain" id="PRO_1000012145" description="DNA repair protein RecO">
    <location>
        <begin position="1"/>
        <end position="246"/>
    </location>
</feature>
<organism>
    <name type="scientific">Pelobacter propionicus (strain DSM 2379 / NBRC 103807 / OttBd1)</name>
    <dbReference type="NCBI Taxonomy" id="338966"/>
    <lineage>
        <taxon>Bacteria</taxon>
        <taxon>Pseudomonadati</taxon>
        <taxon>Thermodesulfobacteriota</taxon>
        <taxon>Desulfuromonadia</taxon>
        <taxon>Desulfuromonadales</taxon>
        <taxon>Desulfuromonadaceae</taxon>
        <taxon>Pelobacter</taxon>
    </lineage>
</organism>
<evidence type="ECO:0000255" key="1">
    <source>
        <dbReference type="HAMAP-Rule" id="MF_00201"/>
    </source>
</evidence>
<proteinExistence type="inferred from homology"/>
<keyword id="KW-0227">DNA damage</keyword>
<keyword id="KW-0233">DNA recombination</keyword>
<keyword id="KW-0234">DNA repair</keyword>
<keyword id="KW-1185">Reference proteome</keyword>